<proteinExistence type="evidence at transcript level"/>
<organism>
    <name type="scientific">Macaca fascicularis</name>
    <name type="common">Crab-eating macaque</name>
    <name type="synonym">Cynomolgus monkey</name>
    <dbReference type="NCBI Taxonomy" id="9541"/>
    <lineage>
        <taxon>Eukaryota</taxon>
        <taxon>Metazoa</taxon>
        <taxon>Chordata</taxon>
        <taxon>Craniata</taxon>
        <taxon>Vertebrata</taxon>
        <taxon>Euteleostomi</taxon>
        <taxon>Mammalia</taxon>
        <taxon>Eutheria</taxon>
        <taxon>Euarchontoglires</taxon>
        <taxon>Primates</taxon>
        <taxon>Haplorrhini</taxon>
        <taxon>Catarrhini</taxon>
        <taxon>Cercopithecidae</taxon>
        <taxon>Cercopithecinae</taxon>
        <taxon>Macaca</taxon>
    </lineage>
</organism>
<dbReference type="EC" id="2.4.1.-"/>
<dbReference type="EMBL" id="AB179168">
    <property type="protein sequence ID" value="BAE02219.1"/>
    <property type="molecule type" value="mRNA"/>
</dbReference>
<dbReference type="RefSeq" id="NP_001271625.1">
    <property type="nucleotide sequence ID" value="NM_001284696.1"/>
</dbReference>
<dbReference type="SMR" id="Q4R3U7"/>
<dbReference type="STRING" id="9541.ENSMFAP00000000574"/>
<dbReference type="CAZy" id="GT8">
    <property type="family name" value="Glycosyltransferase Family 8"/>
</dbReference>
<dbReference type="GlyCosmos" id="Q4R3U7">
    <property type="glycosylation" value="1 site, No reported glycans"/>
</dbReference>
<dbReference type="eggNOG" id="ENOG502QTN8">
    <property type="taxonomic scope" value="Eukaryota"/>
</dbReference>
<dbReference type="Proteomes" id="UP000233100">
    <property type="component" value="Unplaced"/>
</dbReference>
<dbReference type="GO" id="GO:0005794">
    <property type="term" value="C:Golgi apparatus"/>
    <property type="evidence" value="ECO:0007669"/>
    <property type="project" value="TreeGrafter"/>
</dbReference>
<dbReference type="GO" id="GO:0016020">
    <property type="term" value="C:membrane"/>
    <property type="evidence" value="ECO:0007669"/>
    <property type="project" value="UniProtKB-SubCell"/>
</dbReference>
<dbReference type="GO" id="GO:0008194">
    <property type="term" value="F:UDP-glycosyltransferase activity"/>
    <property type="evidence" value="ECO:0007669"/>
    <property type="project" value="UniProtKB-ARBA"/>
</dbReference>
<dbReference type="FunFam" id="3.90.550.10:FF:000078">
    <property type="entry name" value="glycosyltransferase 8 domain-containing protein 2"/>
    <property type="match status" value="1"/>
</dbReference>
<dbReference type="Gene3D" id="3.90.550.10">
    <property type="entry name" value="Spore Coat Polysaccharide Biosynthesis Protein SpsA, Chain A"/>
    <property type="match status" value="1"/>
</dbReference>
<dbReference type="InterPro" id="IPR002495">
    <property type="entry name" value="Glyco_trans_8"/>
</dbReference>
<dbReference type="InterPro" id="IPR050748">
    <property type="entry name" value="Glycosyltrans_8_dom-fam"/>
</dbReference>
<dbReference type="InterPro" id="IPR029044">
    <property type="entry name" value="Nucleotide-diphossugar_trans"/>
</dbReference>
<dbReference type="PANTHER" id="PTHR13778">
    <property type="entry name" value="GLYCOSYLTRANSFERASE 8 DOMAIN-CONTAINING PROTEIN"/>
    <property type="match status" value="1"/>
</dbReference>
<dbReference type="PANTHER" id="PTHR13778:SF2">
    <property type="entry name" value="GLYCOSYLTRANSFERASE 8 DOMAIN-CONTAINING PROTEIN 2"/>
    <property type="match status" value="1"/>
</dbReference>
<dbReference type="Pfam" id="PF01501">
    <property type="entry name" value="Glyco_transf_8"/>
    <property type="match status" value="1"/>
</dbReference>
<dbReference type="SUPFAM" id="SSF53448">
    <property type="entry name" value="Nucleotide-diphospho-sugar transferases"/>
    <property type="match status" value="1"/>
</dbReference>
<reference key="1">
    <citation type="submission" date="2005-06" db="EMBL/GenBank/DDBJ databases">
        <title>DNA sequences of macaque genes expressed in brain or testis and its evolutionary implications.</title>
        <authorList>
            <consortium name="International consortium for macaque cDNA sequencing and analysis"/>
        </authorList>
    </citation>
    <scope>NUCLEOTIDE SEQUENCE [LARGE SCALE MRNA]</scope>
    <source>
        <tissue>Testis</tissue>
    </source>
</reference>
<gene>
    <name type="primary">GLT8D2</name>
    <name type="ORF">QtsA-14057</name>
</gene>
<sequence>MALLRKINQVLLFLLIVTLCVILYKKVHKGTVSKNDADDESETPEELEEEIPVVICAAAGRMGATMAAINSIYSNTDANILFYVVGLRNTLTRIRKWIEHSKLREINFKIVEFNPMVLKGKIRPDSSRPELLQPLNFVRFYLPLLIHQHEKVIYLDDDVIVQGDIHELYDTTLALGHAAAFSDDCDLPSAQDINRLVGLQNTYMGYLDYRKKAIKDLGISPSTCSFNPGVIVANMTEWKHQHITKQLEKWMQKNVEENLYSSSLGGGVATSPMLIVFHGKYSTINPLWHIRHLGWNPDARYSEHFLQEAKLLHWNGRHKPWDFPSVHNDLWESWFVPDPAGIFKLNHHS</sequence>
<evidence type="ECO:0000255" key="1"/>
<evidence type="ECO:0000305" key="2"/>
<accession>Q4R3U7</accession>
<name>GL8D2_MACFA</name>
<keyword id="KW-0325">Glycoprotein</keyword>
<keyword id="KW-0328">Glycosyltransferase</keyword>
<keyword id="KW-0472">Membrane</keyword>
<keyword id="KW-1185">Reference proteome</keyword>
<keyword id="KW-0735">Signal-anchor</keyword>
<keyword id="KW-0808">Transferase</keyword>
<keyword id="KW-0812">Transmembrane</keyword>
<keyword id="KW-1133">Transmembrane helix</keyword>
<feature type="chain" id="PRO_0000271383" description="Glycosyltransferase 8 domain-containing protein 2">
    <location>
        <begin position="1"/>
        <end position="349"/>
    </location>
</feature>
<feature type="topological domain" description="Cytoplasmic" evidence="1">
    <location>
        <begin position="1"/>
        <end position="6"/>
    </location>
</feature>
<feature type="transmembrane region" description="Helical; Signal-anchor for type II membrane protein" evidence="1">
    <location>
        <begin position="7"/>
        <end position="24"/>
    </location>
</feature>
<feature type="topological domain" description="Lumenal" evidence="1">
    <location>
        <begin position="25"/>
        <end position="349"/>
    </location>
</feature>
<feature type="glycosylation site" description="N-linked (GlcNAc...) asparagine" evidence="1">
    <location>
        <position position="234"/>
    </location>
</feature>
<protein>
    <recommendedName>
        <fullName>Glycosyltransferase 8 domain-containing protein 2</fullName>
        <ecNumber>2.4.1.-</ecNumber>
    </recommendedName>
</protein>
<comment type="subcellular location">
    <subcellularLocation>
        <location evidence="2">Membrane</location>
        <topology evidence="2">Single-pass type II membrane protein</topology>
    </subcellularLocation>
</comment>
<comment type="similarity">
    <text evidence="2">Belongs to the glycosyltransferase 8 family.</text>
</comment>